<dbReference type="EMBL" id="CU329672">
    <property type="protein sequence ID" value="CAB40018.1"/>
    <property type="molecule type" value="Genomic_DNA"/>
</dbReference>
<dbReference type="EMBL" id="AB027938">
    <property type="protein sequence ID" value="BAA87242.1"/>
    <property type="molecule type" value="Genomic_DNA"/>
</dbReference>
<dbReference type="PIR" id="T41515">
    <property type="entry name" value="T41515"/>
</dbReference>
<dbReference type="SMR" id="Q9Y7U0"/>
<dbReference type="BioGRID" id="275408">
    <property type="interactions" value="13"/>
</dbReference>
<dbReference type="STRING" id="284812.Q9Y7U0"/>
<dbReference type="iPTMnet" id="Q9Y7U0"/>
<dbReference type="PaxDb" id="4896-SPCC63.14.1"/>
<dbReference type="EnsemblFungi" id="SPCC63.14.1">
    <property type="protein sequence ID" value="SPCC63.14.1:pep"/>
    <property type="gene ID" value="SPCC63.14"/>
</dbReference>
<dbReference type="KEGG" id="spo:2538827"/>
<dbReference type="PomBase" id="SPCC63.14"/>
<dbReference type="VEuPathDB" id="FungiDB:SPCC63.14"/>
<dbReference type="HOGENOM" id="CLU_288576_0_0_1"/>
<dbReference type="InParanoid" id="Q9Y7U0"/>
<dbReference type="OMA" id="ETHYEPG"/>
<dbReference type="PRO" id="PR:Q9Y7U0"/>
<dbReference type="Proteomes" id="UP000002485">
    <property type="component" value="Chromosome III"/>
</dbReference>
<dbReference type="GO" id="GO:0005829">
    <property type="term" value="C:cytosol"/>
    <property type="evidence" value="ECO:0007005"/>
    <property type="project" value="PomBase"/>
</dbReference>
<dbReference type="GO" id="GO:0032126">
    <property type="term" value="C:eisosome"/>
    <property type="evidence" value="ECO:0000266"/>
    <property type="project" value="PomBase"/>
</dbReference>
<dbReference type="GO" id="GO:0070941">
    <property type="term" value="P:eisosome assembly"/>
    <property type="evidence" value="ECO:0000318"/>
    <property type="project" value="GO_Central"/>
</dbReference>
<dbReference type="GO" id="GO:0007009">
    <property type="term" value="P:plasma membrane organization"/>
    <property type="evidence" value="ECO:0000305"/>
    <property type="project" value="PomBase"/>
</dbReference>
<dbReference type="InterPro" id="IPR024527">
    <property type="entry name" value="Eisosome1"/>
</dbReference>
<dbReference type="PANTHER" id="PTHR28298">
    <property type="entry name" value="EISOSOME PROTEIN 1"/>
    <property type="match status" value="1"/>
</dbReference>
<dbReference type="PANTHER" id="PTHR28298:SF1">
    <property type="entry name" value="EISOSOME PROTEIN 1"/>
    <property type="match status" value="1"/>
</dbReference>
<dbReference type="Pfam" id="PF12757">
    <property type="entry name" value="Eisosome1"/>
    <property type="match status" value="1"/>
</dbReference>
<organism>
    <name type="scientific">Schizosaccharomyces pombe (strain 972 / ATCC 24843)</name>
    <name type="common">Fission yeast</name>
    <dbReference type="NCBI Taxonomy" id="284812"/>
    <lineage>
        <taxon>Eukaryota</taxon>
        <taxon>Fungi</taxon>
        <taxon>Dikarya</taxon>
        <taxon>Ascomycota</taxon>
        <taxon>Taphrinomycotina</taxon>
        <taxon>Schizosaccharomycetes</taxon>
        <taxon>Schizosaccharomycetales</taxon>
        <taxon>Schizosaccharomycetaceae</taxon>
        <taxon>Schizosaccharomyces</taxon>
    </lineage>
</organism>
<protein>
    <recommendedName>
        <fullName>Uncharacterized protein C63.14</fullName>
    </recommendedName>
</protein>
<evidence type="ECO:0000256" key="1">
    <source>
        <dbReference type="SAM" id="MobiDB-lite"/>
    </source>
</evidence>
<evidence type="ECO:0000269" key="2">
    <source>
    </source>
</evidence>
<evidence type="ECO:0000269" key="3">
    <source>
    </source>
</evidence>
<evidence type="ECO:0000269" key="4">
    <source>
    </source>
</evidence>
<name>YCJE_SCHPO</name>
<proteinExistence type="evidence at protein level"/>
<feature type="chain" id="PRO_0000351431" description="Uncharacterized protein C63.14">
    <location>
        <begin position="1"/>
        <end position="1184"/>
    </location>
</feature>
<feature type="region of interest" description="Disordered" evidence="1">
    <location>
        <begin position="115"/>
        <end position="152"/>
    </location>
</feature>
<feature type="region of interest" description="Disordered" evidence="1">
    <location>
        <begin position="397"/>
        <end position="426"/>
    </location>
</feature>
<feature type="region of interest" description="Disordered" evidence="1">
    <location>
        <begin position="705"/>
        <end position="870"/>
    </location>
</feature>
<feature type="region of interest" description="Disordered" evidence="1">
    <location>
        <begin position="890"/>
        <end position="1017"/>
    </location>
</feature>
<feature type="region of interest" description="Disordered" evidence="1">
    <location>
        <begin position="1029"/>
        <end position="1107"/>
    </location>
</feature>
<feature type="region of interest" description="Disordered" evidence="1">
    <location>
        <begin position="1135"/>
        <end position="1154"/>
    </location>
</feature>
<feature type="compositionally biased region" description="Polar residues" evidence="1">
    <location>
        <begin position="137"/>
        <end position="152"/>
    </location>
</feature>
<feature type="compositionally biased region" description="Polar residues" evidence="1">
    <location>
        <begin position="397"/>
        <end position="421"/>
    </location>
</feature>
<feature type="compositionally biased region" description="Basic and acidic residues" evidence="1">
    <location>
        <begin position="705"/>
        <end position="767"/>
    </location>
</feature>
<feature type="compositionally biased region" description="Basic and acidic residues" evidence="1">
    <location>
        <begin position="783"/>
        <end position="792"/>
    </location>
</feature>
<feature type="compositionally biased region" description="Basic and acidic residues" evidence="1">
    <location>
        <begin position="849"/>
        <end position="863"/>
    </location>
</feature>
<feature type="compositionally biased region" description="Basic and acidic residues" evidence="1">
    <location>
        <begin position="891"/>
        <end position="902"/>
    </location>
</feature>
<feature type="compositionally biased region" description="Basic and acidic residues" evidence="1">
    <location>
        <begin position="920"/>
        <end position="932"/>
    </location>
</feature>
<feature type="compositionally biased region" description="Low complexity" evidence="1">
    <location>
        <begin position="941"/>
        <end position="950"/>
    </location>
</feature>
<feature type="compositionally biased region" description="Basic and acidic residues" evidence="1">
    <location>
        <begin position="999"/>
        <end position="1011"/>
    </location>
</feature>
<feature type="compositionally biased region" description="Basic and acidic residues" evidence="1">
    <location>
        <begin position="1032"/>
        <end position="1045"/>
    </location>
</feature>
<feature type="compositionally biased region" description="Polar residues" evidence="1">
    <location>
        <begin position="1073"/>
        <end position="1107"/>
    </location>
</feature>
<feature type="compositionally biased region" description="Low complexity" evidence="1">
    <location>
        <begin position="1138"/>
        <end position="1150"/>
    </location>
</feature>
<feature type="modified residue" description="Phosphoserine" evidence="4">
    <location>
        <position position="686"/>
    </location>
</feature>
<feature type="modified residue" description="Phosphoserine" evidence="4">
    <location>
        <position position="905"/>
    </location>
</feature>
<feature type="modified residue" description="Phosphoserine" evidence="4">
    <location>
        <position position="1018"/>
    </location>
</feature>
<sequence>MSTLGNSTVKPTNAEFPGLHAMERYKPATSESLYVKGHYGPHPHKEHPAAYVAAKTGFNATSRRQSVREHHSSHEGSAQLNPDRILYMSAGAVTAAVPNKEHTDNVTTSQTIRYETSSQPSQEVYHPHAGKAAQSAHVMNSTESRPSSAHVSSSYTQKPFAFPLGPVFATSSQAAASETALPSGYEPDEARFIGASQLAKLSASHAHQTPAQTVDDDVPLPTRMAATELVGHIPLRAANYANEYSQDVPASTHRAASELVHGVPMRASGINDPKHDLDAATRHNINSVAAASYVAARSRVIEEEEEPPNEVKERMDYEADAQRRIRKMNVFGSAGAALRERTQQDLMANEQEHSGEFAGFSRNLTNTAAAPTTYEYKRPTSSYTAKDATSKVYRSNTYKPKSSVNGSVYRSKSVKSTTSHNKVPERNSVPAYNEKLMHSSAANAAILSHKNYSPPVQPTRDDEVSQEDARVKEIVRGMKLPLTSSSLSAAAYRPMEKQDPATVERHHIQAEATQRVRDMKLDLTKLESKTNDEIRSYRPRNVVIKPYAAATPPKNIPSTYRAPQAPSVLSPVVTASEGDFELDGITPERQQTMTRSTYQESSQRPFHEDPFRTHPGLLQAVARNHRNSLANIDERIMRQNQAATANTNTVSETDIEALERRLSKAYRMEAQEEAYAINIGGGRVISPEELEEIARRNVDPMVSELSERAAQERERKEQAKEAKRLKKLAKEEKRLKKKEEKARKAEEKRLQKERAKYAKQMSRESAHADQAIANTGPVAPPYFEHETEPSHYEEEEEEEPEERREESSHFSESSGNNEFEETEQEYTHGYGNDVLVQRTDVVNNFGESSHAHDNAVNEKRDLGRNGFGDVDEQDATEVYRHSIERIVPGDYLHDEKTRDTLTRESPAFRSEEAVVEVADEDHPHASEAERAHSYSNRKQASSESSPESQSTHYNDYEGTEDNIVRQTTTVDEDGHQEQTTSTTKVAHPIPVSNGLSSPPRERLDDNAKEILSRSSPKSPVAWFKRKFKNRKDKAAVKRMLEEDSSKQLSSGRDVVAPTSVNHDVSHVGESTKPAVNNSTKPVAVTSKNGHSRNGSHAAHSNNVIGTQPHVNVSAVPNTGNLKDALEGSAVSKTDDVDNVVSGHSNVNGVSKSRPNIVERSEDYVISHLPEQSRAPIGAAFQEDL</sequence>
<reference key="1">
    <citation type="journal article" date="2002" name="Nature">
        <title>The genome sequence of Schizosaccharomyces pombe.</title>
        <authorList>
            <person name="Wood V."/>
            <person name="Gwilliam R."/>
            <person name="Rajandream M.A."/>
            <person name="Lyne M.H."/>
            <person name="Lyne R."/>
            <person name="Stewart A."/>
            <person name="Sgouros J.G."/>
            <person name="Peat N."/>
            <person name="Hayles J."/>
            <person name="Baker S.G."/>
            <person name="Basham D."/>
            <person name="Bowman S."/>
            <person name="Brooks K."/>
            <person name="Brown D."/>
            <person name="Brown S."/>
            <person name="Chillingworth T."/>
            <person name="Churcher C.M."/>
            <person name="Collins M."/>
            <person name="Connor R."/>
            <person name="Cronin A."/>
            <person name="Davis P."/>
            <person name="Feltwell T."/>
            <person name="Fraser A."/>
            <person name="Gentles S."/>
            <person name="Goble A."/>
            <person name="Hamlin N."/>
            <person name="Harris D.E."/>
            <person name="Hidalgo J."/>
            <person name="Hodgson G."/>
            <person name="Holroyd S."/>
            <person name="Hornsby T."/>
            <person name="Howarth S."/>
            <person name="Huckle E.J."/>
            <person name="Hunt S."/>
            <person name="Jagels K."/>
            <person name="James K.D."/>
            <person name="Jones L."/>
            <person name="Jones M."/>
            <person name="Leather S."/>
            <person name="McDonald S."/>
            <person name="McLean J."/>
            <person name="Mooney P."/>
            <person name="Moule S."/>
            <person name="Mungall K.L."/>
            <person name="Murphy L.D."/>
            <person name="Niblett D."/>
            <person name="Odell C."/>
            <person name="Oliver K."/>
            <person name="O'Neil S."/>
            <person name="Pearson D."/>
            <person name="Quail M.A."/>
            <person name="Rabbinowitsch E."/>
            <person name="Rutherford K.M."/>
            <person name="Rutter S."/>
            <person name="Saunders D."/>
            <person name="Seeger K."/>
            <person name="Sharp S."/>
            <person name="Skelton J."/>
            <person name="Simmonds M.N."/>
            <person name="Squares R."/>
            <person name="Squares S."/>
            <person name="Stevens K."/>
            <person name="Taylor K."/>
            <person name="Taylor R.G."/>
            <person name="Tivey A."/>
            <person name="Walsh S.V."/>
            <person name="Warren T."/>
            <person name="Whitehead S."/>
            <person name="Woodward J.R."/>
            <person name="Volckaert G."/>
            <person name="Aert R."/>
            <person name="Robben J."/>
            <person name="Grymonprez B."/>
            <person name="Weltjens I."/>
            <person name="Vanstreels E."/>
            <person name="Rieger M."/>
            <person name="Schaefer M."/>
            <person name="Mueller-Auer S."/>
            <person name="Gabel C."/>
            <person name="Fuchs M."/>
            <person name="Duesterhoeft A."/>
            <person name="Fritzc C."/>
            <person name="Holzer E."/>
            <person name="Moestl D."/>
            <person name="Hilbert H."/>
            <person name="Borzym K."/>
            <person name="Langer I."/>
            <person name="Beck A."/>
            <person name="Lehrach H."/>
            <person name="Reinhardt R."/>
            <person name="Pohl T.M."/>
            <person name="Eger P."/>
            <person name="Zimmermann W."/>
            <person name="Wedler H."/>
            <person name="Wambutt R."/>
            <person name="Purnelle B."/>
            <person name="Goffeau A."/>
            <person name="Cadieu E."/>
            <person name="Dreano S."/>
            <person name="Gloux S."/>
            <person name="Lelaure V."/>
            <person name="Mottier S."/>
            <person name="Galibert F."/>
            <person name="Aves S.J."/>
            <person name="Xiang Z."/>
            <person name="Hunt C."/>
            <person name="Moore K."/>
            <person name="Hurst S.M."/>
            <person name="Lucas M."/>
            <person name="Rochet M."/>
            <person name="Gaillardin C."/>
            <person name="Tallada V.A."/>
            <person name="Garzon A."/>
            <person name="Thode G."/>
            <person name="Daga R.R."/>
            <person name="Cruzado L."/>
            <person name="Jimenez J."/>
            <person name="Sanchez M."/>
            <person name="del Rey F."/>
            <person name="Benito J."/>
            <person name="Dominguez A."/>
            <person name="Revuelta J.L."/>
            <person name="Moreno S."/>
            <person name="Armstrong J."/>
            <person name="Forsburg S.L."/>
            <person name="Cerutti L."/>
            <person name="Lowe T."/>
            <person name="McCombie W.R."/>
            <person name="Paulsen I."/>
            <person name="Potashkin J."/>
            <person name="Shpakovski G.V."/>
            <person name="Ussery D."/>
            <person name="Barrell B.G."/>
            <person name="Nurse P."/>
        </authorList>
    </citation>
    <scope>NUCLEOTIDE SEQUENCE [LARGE SCALE GENOMIC DNA]</scope>
    <source>
        <strain>972 / ATCC 24843</strain>
    </source>
</reference>
<reference key="2">
    <citation type="journal article" date="2000" name="Genes Cells">
        <title>Large-scale screening of intracellular protein localization in living fission yeast cells by the use of a GFP-fusion genomic DNA library.</title>
        <authorList>
            <person name="Ding D.-Q."/>
            <person name="Tomita Y."/>
            <person name="Yamamoto A."/>
            <person name="Chikashige Y."/>
            <person name="Haraguchi T."/>
            <person name="Hiraoka Y."/>
        </authorList>
    </citation>
    <scope>NUCLEOTIDE SEQUENCE [LARGE SCALE GENOMIC DNA] OF 503-699</scope>
    <scope>SUBCELLULAR LOCATION</scope>
    <source>
        <strain>ATCC 38364 / 968</strain>
    </source>
</reference>
<reference key="3">
    <citation type="journal article" date="2006" name="Nat. Biotechnol.">
        <title>ORFeome cloning and global analysis of protein localization in the fission yeast Schizosaccharomyces pombe.</title>
        <authorList>
            <person name="Matsuyama A."/>
            <person name="Arai R."/>
            <person name="Yashiroda Y."/>
            <person name="Shirai A."/>
            <person name="Kamata A."/>
            <person name="Sekido S."/>
            <person name="Kobayashi Y."/>
            <person name="Hashimoto A."/>
            <person name="Hamamoto M."/>
            <person name="Hiraoka Y."/>
            <person name="Horinouchi S."/>
            <person name="Yoshida M."/>
        </authorList>
    </citation>
    <scope>SUBCELLULAR LOCATION [LARGE SCALE ANALYSIS]</scope>
</reference>
<reference key="4">
    <citation type="journal article" date="2008" name="J. Proteome Res.">
        <title>Phosphoproteome analysis of fission yeast.</title>
        <authorList>
            <person name="Wilson-Grady J.T."/>
            <person name="Villen J."/>
            <person name="Gygi S.P."/>
        </authorList>
    </citation>
    <scope>PHOSPHORYLATION [LARGE SCALE ANALYSIS] AT SER-686; SER-905 AND SER-1018</scope>
    <scope>IDENTIFICATION BY MASS SPECTROMETRY</scope>
</reference>
<comment type="subcellular location">
    <subcellularLocation>
        <location evidence="2 3">Cytoplasm</location>
    </subcellularLocation>
</comment>
<gene>
    <name type="ORF">SPCC63.14</name>
</gene>
<accession>Q9Y7U0</accession>
<accession>Q9UTX9</accession>
<keyword id="KW-0963">Cytoplasm</keyword>
<keyword id="KW-0597">Phosphoprotein</keyword>
<keyword id="KW-1185">Reference proteome</keyword>